<keyword id="KW-0539">Nucleus</keyword>
<keyword id="KW-1185">Reference proteome</keyword>
<keyword id="KW-0687">Ribonucleoprotein</keyword>
<keyword id="KW-0690">Ribosome biogenesis</keyword>
<keyword id="KW-0698">rRNA processing</keyword>
<accession>Q6FQ21</accession>
<sequence length="513" mass="57139">MSYVLTETSAGYALLKASDKKIYKSSSLIMDLDSSEKVLKEFKIAAFSKFNSAANALEEASAIIEGKVSPQLEKLLDEIKKEKKATLIVSETKLANAINKLGLNFNVVSDAVTLDIYRAVKEYLPDLLPGMSDSDLSKMSLGLAHSIGRHKLKFSADKVDVMIIQAIALLDDLDKEVNTYSMRCKEWYGWHFPELAKIVTDSVAYARLILTMGVRSKAAETDMSEILPEEIEERVKAAAEVSMGTEITDVDLINIRALADQIVEFAAYREQLSNYLSSRMKAIAPNLTQLVGELVGARLIAHAGSLISLAKSPASTIQILGAEKALFRALKTKHDTPKYGLLYHASLVGQASGRNKGKIARVLAAKAAVALRYDALAEDRDDSGDIGLEVRAKVENRLSQIEGRDLRTTPKVVREAKKVEMTEARAYNADADTAAAADSDDEDEETEEKADKKRKRDTEEEEEEEETESKKSKKEKKEKKEKKDKKEKKEKKEKKDKKEKKEKKEKKEKKSKK</sequence>
<comment type="function">
    <text evidence="1">Required for pre-18S rRNA processing. May bind microtubules (By similarity).</text>
</comment>
<comment type="subcellular location">
    <subcellularLocation>
        <location evidence="1">Nucleus</location>
        <location evidence="1">Nucleolus</location>
    </subcellularLocation>
</comment>
<comment type="similarity">
    <text evidence="4">Belongs to the NOP5/NOP56 family.</text>
</comment>
<name>NOP58_CANGA</name>
<proteinExistence type="inferred from homology"/>
<dbReference type="EMBL" id="CR380955">
    <property type="protein sequence ID" value="CAG60610.1"/>
    <property type="molecule type" value="Genomic_DNA"/>
</dbReference>
<dbReference type="RefSeq" id="XP_447673.1">
    <property type="nucleotide sequence ID" value="XM_447673.1"/>
</dbReference>
<dbReference type="SMR" id="Q6FQ21"/>
<dbReference type="FunCoup" id="Q6FQ21">
    <property type="interactions" value="1783"/>
</dbReference>
<dbReference type="STRING" id="284593.Q6FQ21"/>
<dbReference type="EnsemblFungi" id="CAGL0I09790g-T">
    <property type="protein sequence ID" value="CAGL0I09790g-T-p1"/>
    <property type="gene ID" value="CAGL0I09790g"/>
</dbReference>
<dbReference type="KEGG" id="cgr:2888946"/>
<dbReference type="CGD" id="CAL0132264">
    <property type="gene designation" value="CAGL0I09790g"/>
</dbReference>
<dbReference type="VEuPathDB" id="FungiDB:CAGL0I09790g"/>
<dbReference type="eggNOG" id="KOG2572">
    <property type="taxonomic scope" value="Eukaryota"/>
</dbReference>
<dbReference type="HOGENOM" id="CLU_015495_5_2_1"/>
<dbReference type="InParanoid" id="Q6FQ21"/>
<dbReference type="OMA" id="MGMRSNW"/>
<dbReference type="Proteomes" id="UP000002428">
    <property type="component" value="Chromosome I"/>
</dbReference>
<dbReference type="GO" id="GO:0031428">
    <property type="term" value="C:box C/D methylation guide snoRNP complex"/>
    <property type="evidence" value="ECO:0007669"/>
    <property type="project" value="EnsemblFungi"/>
</dbReference>
<dbReference type="GO" id="GO:0005730">
    <property type="term" value="C:nucleolus"/>
    <property type="evidence" value="ECO:0007669"/>
    <property type="project" value="UniProtKB-SubCell"/>
</dbReference>
<dbReference type="GO" id="GO:0032040">
    <property type="term" value="C:small-subunit processome"/>
    <property type="evidence" value="ECO:0007669"/>
    <property type="project" value="EnsemblFungi"/>
</dbReference>
<dbReference type="GO" id="GO:0030515">
    <property type="term" value="F:snoRNA binding"/>
    <property type="evidence" value="ECO:0007669"/>
    <property type="project" value="InterPro"/>
</dbReference>
<dbReference type="GO" id="GO:0017069">
    <property type="term" value="F:snRNA binding"/>
    <property type="evidence" value="ECO:0007669"/>
    <property type="project" value="EnsemblFungi"/>
</dbReference>
<dbReference type="GO" id="GO:0000494">
    <property type="term" value="P:box C/D sno(s)RNA 3'-end processing"/>
    <property type="evidence" value="ECO:0007669"/>
    <property type="project" value="EnsemblFungi"/>
</dbReference>
<dbReference type="GO" id="GO:0000480">
    <property type="term" value="P:endonucleolytic cleavage in 5'-ETS of tricistronic rRNA transcript (SSU-rRNA, 5.8S rRNA, LSU-rRNA)"/>
    <property type="evidence" value="ECO:0007669"/>
    <property type="project" value="EnsemblFungi"/>
</dbReference>
<dbReference type="GO" id="GO:0000447">
    <property type="term" value="P:endonucleolytic cleavage in ITS1 to separate SSU-rRNA from 5.8S rRNA and LSU-rRNA from tricistronic rRNA transcript (SSU-rRNA, 5.8S rRNA, LSU-rRNA)"/>
    <property type="evidence" value="ECO:0007669"/>
    <property type="project" value="EnsemblFungi"/>
</dbReference>
<dbReference type="GO" id="GO:0000472">
    <property type="term" value="P:endonucleolytic cleavage to generate mature 5'-end of SSU-rRNA from (SSU-rRNA, 5.8S rRNA, LSU-rRNA)"/>
    <property type="evidence" value="ECO:0007669"/>
    <property type="project" value="EnsemblFungi"/>
</dbReference>
<dbReference type="GO" id="GO:1902570">
    <property type="term" value="P:protein localization to nucleolus"/>
    <property type="evidence" value="ECO:0007669"/>
    <property type="project" value="EnsemblFungi"/>
</dbReference>
<dbReference type="GO" id="GO:0000452">
    <property type="term" value="P:snoRNA guided rRNA 2'-O-methylation"/>
    <property type="evidence" value="ECO:0007669"/>
    <property type="project" value="EnsemblFungi"/>
</dbReference>
<dbReference type="FunFam" id="1.10.246.90:FF:000003">
    <property type="entry name" value="Nucleolar protein 58"/>
    <property type="match status" value="1"/>
</dbReference>
<dbReference type="FunFam" id="1.10.287.4070:FF:000001">
    <property type="entry name" value="Probable Nucleolar protein 58"/>
    <property type="match status" value="1"/>
</dbReference>
<dbReference type="Gene3D" id="1.10.287.4070">
    <property type="match status" value="1"/>
</dbReference>
<dbReference type="Gene3D" id="1.10.246.90">
    <property type="entry name" value="Nop domain"/>
    <property type="match status" value="1"/>
</dbReference>
<dbReference type="InterPro" id="IPR045056">
    <property type="entry name" value="Nop56/Nop58"/>
</dbReference>
<dbReference type="InterPro" id="IPR012974">
    <property type="entry name" value="NOP58/56_N"/>
</dbReference>
<dbReference type="InterPro" id="IPR042239">
    <property type="entry name" value="Nop_C"/>
</dbReference>
<dbReference type="InterPro" id="IPR002687">
    <property type="entry name" value="Nop_dom"/>
</dbReference>
<dbReference type="InterPro" id="IPR036070">
    <property type="entry name" value="Nop_dom_sf"/>
</dbReference>
<dbReference type="InterPro" id="IPR012976">
    <property type="entry name" value="NOSIC"/>
</dbReference>
<dbReference type="PANTHER" id="PTHR10894">
    <property type="entry name" value="NUCLEOLAR PROTEIN 5 NUCLEOLAR PROTEIN NOP5 NOP58"/>
    <property type="match status" value="1"/>
</dbReference>
<dbReference type="PANTHER" id="PTHR10894:SF1">
    <property type="entry name" value="NUCLEOLAR PROTEIN 58"/>
    <property type="match status" value="1"/>
</dbReference>
<dbReference type="Pfam" id="PF01798">
    <property type="entry name" value="Nop"/>
    <property type="match status" value="1"/>
</dbReference>
<dbReference type="Pfam" id="PF08156">
    <property type="entry name" value="NOP5NT"/>
    <property type="match status" value="1"/>
</dbReference>
<dbReference type="SMART" id="SM00931">
    <property type="entry name" value="NOSIC"/>
    <property type="match status" value="1"/>
</dbReference>
<dbReference type="SUPFAM" id="SSF89124">
    <property type="entry name" value="Nop domain"/>
    <property type="match status" value="1"/>
</dbReference>
<dbReference type="PROSITE" id="PS51358">
    <property type="entry name" value="NOP"/>
    <property type="match status" value="1"/>
</dbReference>
<gene>
    <name type="primary">NOP58</name>
    <name type="ordered locus">CAGL0I09790g</name>
</gene>
<reference key="1">
    <citation type="journal article" date="2004" name="Nature">
        <title>Genome evolution in yeasts.</title>
        <authorList>
            <person name="Dujon B."/>
            <person name="Sherman D."/>
            <person name="Fischer G."/>
            <person name="Durrens P."/>
            <person name="Casaregola S."/>
            <person name="Lafontaine I."/>
            <person name="de Montigny J."/>
            <person name="Marck C."/>
            <person name="Neuveglise C."/>
            <person name="Talla E."/>
            <person name="Goffard N."/>
            <person name="Frangeul L."/>
            <person name="Aigle M."/>
            <person name="Anthouard V."/>
            <person name="Babour A."/>
            <person name="Barbe V."/>
            <person name="Barnay S."/>
            <person name="Blanchin S."/>
            <person name="Beckerich J.-M."/>
            <person name="Beyne E."/>
            <person name="Bleykasten C."/>
            <person name="Boisrame A."/>
            <person name="Boyer J."/>
            <person name="Cattolico L."/>
            <person name="Confanioleri F."/>
            <person name="de Daruvar A."/>
            <person name="Despons L."/>
            <person name="Fabre E."/>
            <person name="Fairhead C."/>
            <person name="Ferry-Dumazet H."/>
            <person name="Groppi A."/>
            <person name="Hantraye F."/>
            <person name="Hennequin C."/>
            <person name="Jauniaux N."/>
            <person name="Joyet P."/>
            <person name="Kachouri R."/>
            <person name="Kerrest A."/>
            <person name="Koszul R."/>
            <person name="Lemaire M."/>
            <person name="Lesur I."/>
            <person name="Ma L."/>
            <person name="Muller H."/>
            <person name="Nicaud J.-M."/>
            <person name="Nikolski M."/>
            <person name="Oztas S."/>
            <person name="Ozier-Kalogeropoulos O."/>
            <person name="Pellenz S."/>
            <person name="Potier S."/>
            <person name="Richard G.-F."/>
            <person name="Straub M.-L."/>
            <person name="Suleau A."/>
            <person name="Swennen D."/>
            <person name="Tekaia F."/>
            <person name="Wesolowski-Louvel M."/>
            <person name="Westhof E."/>
            <person name="Wirth B."/>
            <person name="Zeniou-Meyer M."/>
            <person name="Zivanovic Y."/>
            <person name="Bolotin-Fukuhara M."/>
            <person name="Thierry A."/>
            <person name="Bouchier C."/>
            <person name="Caudron B."/>
            <person name="Scarpelli C."/>
            <person name="Gaillardin C."/>
            <person name="Weissenbach J."/>
            <person name="Wincker P."/>
            <person name="Souciet J.-L."/>
        </authorList>
    </citation>
    <scope>NUCLEOTIDE SEQUENCE [LARGE SCALE GENOMIC DNA]</scope>
    <source>
        <strain>ATCC 2001 / BCRC 20586 / JCM 3761 / NBRC 0622 / NRRL Y-65 / CBS 138</strain>
    </source>
</reference>
<organism>
    <name type="scientific">Candida glabrata (strain ATCC 2001 / BCRC 20586 / JCM 3761 / NBRC 0622 / NRRL Y-65 / CBS 138)</name>
    <name type="common">Yeast</name>
    <name type="synonym">Nakaseomyces glabratus</name>
    <dbReference type="NCBI Taxonomy" id="284593"/>
    <lineage>
        <taxon>Eukaryota</taxon>
        <taxon>Fungi</taxon>
        <taxon>Dikarya</taxon>
        <taxon>Ascomycota</taxon>
        <taxon>Saccharomycotina</taxon>
        <taxon>Saccharomycetes</taxon>
        <taxon>Saccharomycetales</taxon>
        <taxon>Saccharomycetaceae</taxon>
        <taxon>Nakaseomyces</taxon>
    </lineage>
</organism>
<protein>
    <recommendedName>
        <fullName>Nucleolar protein 58</fullName>
    </recommendedName>
</protein>
<evidence type="ECO:0000250" key="1"/>
<evidence type="ECO:0000255" key="2">
    <source>
        <dbReference type="PROSITE-ProRule" id="PRU00690"/>
    </source>
</evidence>
<evidence type="ECO:0000256" key="3">
    <source>
        <dbReference type="SAM" id="MobiDB-lite"/>
    </source>
</evidence>
<evidence type="ECO:0000305" key="4"/>
<feature type="chain" id="PRO_0000350980" description="Nucleolar protein 58">
    <location>
        <begin position="1"/>
        <end position="513"/>
    </location>
</feature>
<feature type="domain" description="Nop" evidence="2">
    <location>
        <begin position="283"/>
        <end position="403"/>
    </location>
</feature>
<feature type="region of interest" description="Disordered" evidence="3">
    <location>
        <begin position="424"/>
        <end position="513"/>
    </location>
</feature>
<feature type="compositionally biased region" description="Acidic residues" evidence="3">
    <location>
        <begin position="438"/>
        <end position="448"/>
    </location>
</feature>
<feature type="compositionally biased region" description="Basic residues" evidence="3">
    <location>
        <begin position="471"/>
        <end position="513"/>
    </location>
</feature>